<evidence type="ECO:0000255" key="1">
    <source>
        <dbReference type="HAMAP-Rule" id="MF_00249"/>
    </source>
</evidence>
<dbReference type="EMBL" id="CP000570">
    <property type="protein sequence ID" value="ABN82829.1"/>
    <property type="molecule type" value="Genomic_DNA"/>
</dbReference>
<dbReference type="RefSeq" id="WP_004198316.1">
    <property type="nucleotide sequence ID" value="NC_009074.1"/>
</dbReference>
<dbReference type="SMR" id="A3N4H2"/>
<dbReference type="GeneID" id="93058712"/>
<dbReference type="KEGG" id="bpd:BURPS668_0190"/>
<dbReference type="HOGENOM" id="CLU_033123_0_0_4"/>
<dbReference type="GO" id="GO:0009376">
    <property type="term" value="C:HslUV protease complex"/>
    <property type="evidence" value="ECO:0007669"/>
    <property type="project" value="UniProtKB-UniRule"/>
</dbReference>
<dbReference type="GO" id="GO:0005524">
    <property type="term" value="F:ATP binding"/>
    <property type="evidence" value="ECO:0007669"/>
    <property type="project" value="UniProtKB-UniRule"/>
</dbReference>
<dbReference type="GO" id="GO:0016887">
    <property type="term" value="F:ATP hydrolysis activity"/>
    <property type="evidence" value="ECO:0007669"/>
    <property type="project" value="InterPro"/>
</dbReference>
<dbReference type="GO" id="GO:0008233">
    <property type="term" value="F:peptidase activity"/>
    <property type="evidence" value="ECO:0007669"/>
    <property type="project" value="InterPro"/>
</dbReference>
<dbReference type="GO" id="GO:0036402">
    <property type="term" value="F:proteasome-activating activity"/>
    <property type="evidence" value="ECO:0007669"/>
    <property type="project" value="UniProtKB-UniRule"/>
</dbReference>
<dbReference type="GO" id="GO:0043335">
    <property type="term" value="P:protein unfolding"/>
    <property type="evidence" value="ECO:0007669"/>
    <property type="project" value="UniProtKB-UniRule"/>
</dbReference>
<dbReference type="GO" id="GO:0051603">
    <property type="term" value="P:proteolysis involved in protein catabolic process"/>
    <property type="evidence" value="ECO:0007669"/>
    <property type="project" value="TreeGrafter"/>
</dbReference>
<dbReference type="CDD" id="cd19498">
    <property type="entry name" value="RecA-like_HslU"/>
    <property type="match status" value="1"/>
</dbReference>
<dbReference type="FunFam" id="3.40.50.300:FF:000213">
    <property type="entry name" value="ATP-dependent protease ATPase subunit HslU"/>
    <property type="match status" value="1"/>
</dbReference>
<dbReference type="FunFam" id="3.40.50.300:FF:000220">
    <property type="entry name" value="ATP-dependent protease ATPase subunit HslU"/>
    <property type="match status" value="1"/>
</dbReference>
<dbReference type="Gene3D" id="1.10.8.60">
    <property type="match status" value="1"/>
</dbReference>
<dbReference type="Gene3D" id="1.10.8.10">
    <property type="entry name" value="DNA helicase RuvA subunit, C-terminal domain"/>
    <property type="match status" value="2"/>
</dbReference>
<dbReference type="Gene3D" id="3.40.50.300">
    <property type="entry name" value="P-loop containing nucleotide triphosphate hydrolases"/>
    <property type="match status" value="2"/>
</dbReference>
<dbReference type="HAMAP" id="MF_00249">
    <property type="entry name" value="HslU"/>
    <property type="match status" value="1"/>
</dbReference>
<dbReference type="InterPro" id="IPR003593">
    <property type="entry name" value="AAA+_ATPase"/>
</dbReference>
<dbReference type="InterPro" id="IPR050052">
    <property type="entry name" value="ATP-dep_Clp_protease_ClpX"/>
</dbReference>
<dbReference type="InterPro" id="IPR003959">
    <property type="entry name" value="ATPase_AAA_core"/>
</dbReference>
<dbReference type="InterPro" id="IPR019489">
    <property type="entry name" value="Clp_ATPase_C"/>
</dbReference>
<dbReference type="InterPro" id="IPR004491">
    <property type="entry name" value="HslU"/>
</dbReference>
<dbReference type="InterPro" id="IPR027417">
    <property type="entry name" value="P-loop_NTPase"/>
</dbReference>
<dbReference type="NCBIfam" id="TIGR00390">
    <property type="entry name" value="hslU"/>
    <property type="match status" value="1"/>
</dbReference>
<dbReference type="NCBIfam" id="NF003544">
    <property type="entry name" value="PRK05201.1"/>
    <property type="match status" value="1"/>
</dbReference>
<dbReference type="PANTHER" id="PTHR48102">
    <property type="entry name" value="ATP-DEPENDENT CLP PROTEASE ATP-BINDING SUBUNIT CLPX-LIKE, MITOCHONDRIAL-RELATED"/>
    <property type="match status" value="1"/>
</dbReference>
<dbReference type="PANTHER" id="PTHR48102:SF3">
    <property type="entry name" value="ATP-DEPENDENT PROTEASE ATPASE SUBUNIT HSLU"/>
    <property type="match status" value="1"/>
</dbReference>
<dbReference type="Pfam" id="PF00004">
    <property type="entry name" value="AAA"/>
    <property type="match status" value="1"/>
</dbReference>
<dbReference type="Pfam" id="PF07724">
    <property type="entry name" value="AAA_2"/>
    <property type="match status" value="1"/>
</dbReference>
<dbReference type="SMART" id="SM00382">
    <property type="entry name" value="AAA"/>
    <property type="match status" value="1"/>
</dbReference>
<dbReference type="SMART" id="SM01086">
    <property type="entry name" value="ClpB_D2-small"/>
    <property type="match status" value="1"/>
</dbReference>
<dbReference type="SUPFAM" id="SSF52540">
    <property type="entry name" value="P-loop containing nucleoside triphosphate hydrolases"/>
    <property type="match status" value="1"/>
</dbReference>
<comment type="function">
    <text evidence="1">ATPase subunit of a proteasome-like degradation complex; this subunit has chaperone activity. The binding of ATP and its subsequent hydrolysis by HslU are essential for unfolding of protein substrates subsequently hydrolyzed by HslV. HslU recognizes the N-terminal part of its protein substrates and unfolds these before they are guided to HslV for hydrolysis.</text>
</comment>
<comment type="subunit">
    <text evidence="1">A double ring-shaped homohexamer of HslV is capped on each side by a ring-shaped HslU homohexamer. The assembly of the HslU/HslV complex is dependent on binding of ATP.</text>
</comment>
<comment type="subcellular location">
    <subcellularLocation>
        <location evidence="1">Cytoplasm</location>
    </subcellularLocation>
</comment>
<comment type="similarity">
    <text evidence="1">Belongs to the ClpX chaperone family. HslU subfamily.</text>
</comment>
<name>HSLU_BURP6</name>
<protein>
    <recommendedName>
        <fullName evidence="1">ATP-dependent protease ATPase subunit HslU</fullName>
    </recommendedName>
    <alternativeName>
        <fullName evidence="1">Unfoldase HslU</fullName>
    </alternativeName>
</protein>
<proteinExistence type="inferred from homology"/>
<sequence length="447" mass="49757">MSTMTPAEIVSELDKHIIGQAKAKKAVAVALRNRWRRQQVAEPLRQEITPKNILMIGPTGVGKTEIARRLAKLADAPFIKIEATKFTEVGYVGRDVDSIVRDLIEISVKQTRETEMRKVRSKATDLAEDRILDVLLPQPRAVGFGASAEHANDDNNATRQTFRKRLREGQLDDKEIELDIEQPAVGMDIMAPPGMEEMTEQIRSMFSNLGSGKKQRRKVKIREALKLLTDEEAAKMLNDEEVKTKAVQNVEQNGIVFLDEIDKITSRNHEGGGGEVSRQGVQRDLLPLVEGTTINTKYGMVKTDHILFIASGAFHLAKPSDLIPELQGRFPIRVELDSLSVKDFEAILVATDASLVKQYQALLATEDVKLEFADDGIRRLAEIAYAVNEKTENIGARRLYTVIEKLLEEVSFAAGNHAGQSVTIDSAYVDRALGEVSKDEDLSRYVL</sequence>
<gene>
    <name evidence="1" type="primary">hslU</name>
    <name type="ordered locus">BURPS668_0190</name>
</gene>
<feature type="chain" id="PRO_1000012719" description="ATP-dependent protease ATPase subunit HslU">
    <location>
        <begin position="1"/>
        <end position="447"/>
    </location>
</feature>
<feature type="binding site" evidence="1">
    <location>
        <position position="18"/>
    </location>
    <ligand>
        <name>ATP</name>
        <dbReference type="ChEBI" id="CHEBI:30616"/>
    </ligand>
</feature>
<feature type="binding site" evidence="1">
    <location>
        <begin position="60"/>
        <end position="65"/>
    </location>
    <ligand>
        <name>ATP</name>
        <dbReference type="ChEBI" id="CHEBI:30616"/>
    </ligand>
</feature>
<feature type="binding site" evidence="1">
    <location>
        <position position="259"/>
    </location>
    <ligand>
        <name>ATP</name>
        <dbReference type="ChEBI" id="CHEBI:30616"/>
    </ligand>
</feature>
<feature type="binding site" evidence="1">
    <location>
        <position position="325"/>
    </location>
    <ligand>
        <name>ATP</name>
        <dbReference type="ChEBI" id="CHEBI:30616"/>
    </ligand>
</feature>
<feature type="binding site" evidence="1">
    <location>
        <position position="397"/>
    </location>
    <ligand>
        <name>ATP</name>
        <dbReference type="ChEBI" id="CHEBI:30616"/>
    </ligand>
</feature>
<accession>A3N4H2</accession>
<keyword id="KW-0067">ATP-binding</keyword>
<keyword id="KW-0143">Chaperone</keyword>
<keyword id="KW-0963">Cytoplasm</keyword>
<keyword id="KW-0547">Nucleotide-binding</keyword>
<keyword id="KW-0346">Stress response</keyword>
<reference key="1">
    <citation type="journal article" date="2010" name="Genome Biol. Evol.">
        <title>Continuing evolution of Burkholderia mallei through genome reduction and large-scale rearrangements.</title>
        <authorList>
            <person name="Losada L."/>
            <person name="Ronning C.M."/>
            <person name="DeShazer D."/>
            <person name="Woods D."/>
            <person name="Fedorova N."/>
            <person name="Kim H.S."/>
            <person name="Shabalina S.A."/>
            <person name="Pearson T.R."/>
            <person name="Brinkac L."/>
            <person name="Tan P."/>
            <person name="Nandi T."/>
            <person name="Crabtree J."/>
            <person name="Badger J."/>
            <person name="Beckstrom-Sternberg S."/>
            <person name="Saqib M."/>
            <person name="Schutzer S.E."/>
            <person name="Keim P."/>
            <person name="Nierman W.C."/>
        </authorList>
    </citation>
    <scope>NUCLEOTIDE SEQUENCE [LARGE SCALE GENOMIC DNA]</scope>
    <source>
        <strain>668</strain>
    </source>
</reference>
<organism>
    <name type="scientific">Burkholderia pseudomallei (strain 668)</name>
    <dbReference type="NCBI Taxonomy" id="320373"/>
    <lineage>
        <taxon>Bacteria</taxon>
        <taxon>Pseudomonadati</taxon>
        <taxon>Pseudomonadota</taxon>
        <taxon>Betaproteobacteria</taxon>
        <taxon>Burkholderiales</taxon>
        <taxon>Burkholderiaceae</taxon>
        <taxon>Burkholderia</taxon>
        <taxon>pseudomallei group</taxon>
    </lineage>
</organism>